<feature type="chain" id="PRO_0000110437" description="Beta-ketoacyl-[acyl-carrier-protein] synthase III 1">
    <location>
        <begin position="1"/>
        <end position="323"/>
    </location>
</feature>
<feature type="region of interest" description="ACP-binding" evidence="1">
    <location>
        <begin position="255"/>
        <end position="259"/>
    </location>
</feature>
<feature type="active site" evidence="1">
    <location>
        <position position="114"/>
    </location>
</feature>
<feature type="active site" evidence="1">
    <location>
        <position position="254"/>
    </location>
</feature>
<feature type="active site" evidence="1">
    <location>
        <position position="284"/>
    </location>
</feature>
<feature type="sequence conflict" description="In Ref. 1; BAA93641." evidence="2" ref="1">
    <original>T</original>
    <variation>A</variation>
    <location>
        <position position="58"/>
    </location>
</feature>
<keyword id="KW-0012">Acyltransferase</keyword>
<keyword id="KW-0963">Cytoplasm</keyword>
<keyword id="KW-0275">Fatty acid biosynthesis</keyword>
<keyword id="KW-0276">Fatty acid metabolism</keyword>
<keyword id="KW-0444">Lipid biosynthesis</keyword>
<keyword id="KW-0443">Lipid metabolism</keyword>
<keyword id="KW-0511">Multifunctional enzyme</keyword>
<keyword id="KW-1185">Reference proteome</keyword>
<keyword id="KW-0808">Transferase</keyword>
<proteinExistence type="inferred from homology"/>
<evidence type="ECO:0000255" key="1">
    <source>
        <dbReference type="HAMAP-Rule" id="MF_01815"/>
    </source>
</evidence>
<evidence type="ECO:0000305" key="2"/>
<organism>
    <name type="scientific">Lactiplantibacillus plantarum (strain ATCC BAA-793 / NCIMB 8826 / WCFS1)</name>
    <name type="common">Lactobacillus plantarum</name>
    <dbReference type="NCBI Taxonomy" id="220668"/>
    <lineage>
        <taxon>Bacteria</taxon>
        <taxon>Bacillati</taxon>
        <taxon>Bacillota</taxon>
        <taxon>Bacilli</taxon>
        <taxon>Lactobacillales</taxon>
        <taxon>Lactobacillaceae</taxon>
        <taxon>Lactiplantibacillus</taxon>
    </lineage>
</organism>
<name>FABH1_LACPL</name>
<accession>Q88YZ4</accession>
<accession>F9UL58</accession>
<accession>Q9LCH0</accession>
<dbReference type="EC" id="2.3.1.180" evidence="1"/>
<dbReference type="EMBL" id="AB025973">
    <property type="protein sequence ID" value="BAA93641.1"/>
    <property type="molecule type" value="Genomic_DNA"/>
</dbReference>
<dbReference type="EMBL" id="AL935263">
    <property type="protein sequence ID" value="CCC78073.1"/>
    <property type="molecule type" value="Genomic_DNA"/>
</dbReference>
<dbReference type="RefSeq" id="WP_003640915.1">
    <property type="nucleotide sequence ID" value="NC_004567.2"/>
</dbReference>
<dbReference type="RefSeq" id="YP_004888587.1">
    <property type="nucleotide sequence ID" value="NC_004567.2"/>
</dbReference>
<dbReference type="SMR" id="Q88YZ4"/>
<dbReference type="STRING" id="220668.lp_0588"/>
<dbReference type="EnsemblBacteria" id="CCC78073">
    <property type="protein sequence ID" value="CCC78073"/>
    <property type="gene ID" value="lp_0588"/>
</dbReference>
<dbReference type="KEGG" id="lpl:lp_0588"/>
<dbReference type="PATRIC" id="fig|220668.9.peg.492"/>
<dbReference type="eggNOG" id="COG0332">
    <property type="taxonomic scope" value="Bacteria"/>
</dbReference>
<dbReference type="HOGENOM" id="CLU_039592_3_1_9"/>
<dbReference type="OrthoDB" id="9815506at2"/>
<dbReference type="PhylomeDB" id="Q88YZ4"/>
<dbReference type="BRENDA" id="2.3.1.180">
    <property type="organism ID" value="2849"/>
</dbReference>
<dbReference type="UniPathway" id="UPA00094"/>
<dbReference type="Proteomes" id="UP000000432">
    <property type="component" value="Chromosome"/>
</dbReference>
<dbReference type="GO" id="GO:0005737">
    <property type="term" value="C:cytoplasm"/>
    <property type="evidence" value="ECO:0007669"/>
    <property type="project" value="UniProtKB-SubCell"/>
</dbReference>
<dbReference type="GO" id="GO:0004315">
    <property type="term" value="F:3-oxoacyl-[acyl-carrier-protein] synthase activity"/>
    <property type="evidence" value="ECO:0007669"/>
    <property type="project" value="InterPro"/>
</dbReference>
<dbReference type="GO" id="GO:0033818">
    <property type="term" value="F:beta-ketoacyl-acyl-carrier-protein synthase III activity"/>
    <property type="evidence" value="ECO:0007669"/>
    <property type="project" value="UniProtKB-UniRule"/>
</dbReference>
<dbReference type="GO" id="GO:0006633">
    <property type="term" value="P:fatty acid biosynthetic process"/>
    <property type="evidence" value="ECO:0007669"/>
    <property type="project" value="UniProtKB-UniRule"/>
</dbReference>
<dbReference type="GO" id="GO:0044550">
    <property type="term" value="P:secondary metabolite biosynthetic process"/>
    <property type="evidence" value="ECO:0007669"/>
    <property type="project" value="TreeGrafter"/>
</dbReference>
<dbReference type="CDD" id="cd00830">
    <property type="entry name" value="KAS_III"/>
    <property type="match status" value="1"/>
</dbReference>
<dbReference type="Gene3D" id="3.40.47.10">
    <property type="match status" value="1"/>
</dbReference>
<dbReference type="HAMAP" id="MF_01815">
    <property type="entry name" value="FabH"/>
    <property type="match status" value="1"/>
</dbReference>
<dbReference type="InterPro" id="IPR013747">
    <property type="entry name" value="ACP_syn_III_C"/>
</dbReference>
<dbReference type="InterPro" id="IPR013751">
    <property type="entry name" value="ACP_syn_III_N"/>
</dbReference>
<dbReference type="InterPro" id="IPR004655">
    <property type="entry name" value="FabH"/>
</dbReference>
<dbReference type="InterPro" id="IPR016039">
    <property type="entry name" value="Thiolase-like"/>
</dbReference>
<dbReference type="NCBIfam" id="TIGR00747">
    <property type="entry name" value="fabH"/>
    <property type="match status" value="1"/>
</dbReference>
<dbReference type="NCBIfam" id="NF006829">
    <property type="entry name" value="PRK09352.1"/>
    <property type="match status" value="1"/>
</dbReference>
<dbReference type="PANTHER" id="PTHR34069">
    <property type="entry name" value="3-OXOACYL-[ACYL-CARRIER-PROTEIN] SYNTHASE 3"/>
    <property type="match status" value="1"/>
</dbReference>
<dbReference type="PANTHER" id="PTHR34069:SF2">
    <property type="entry name" value="BETA-KETOACYL-[ACYL-CARRIER-PROTEIN] SYNTHASE III"/>
    <property type="match status" value="1"/>
</dbReference>
<dbReference type="Pfam" id="PF08545">
    <property type="entry name" value="ACP_syn_III"/>
    <property type="match status" value="1"/>
</dbReference>
<dbReference type="Pfam" id="PF08541">
    <property type="entry name" value="ACP_syn_III_C"/>
    <property type="match status" value="1"/>
</dbReference>
<dbReference type="SUPFAM" id="SSF53901">
    <property type="entry name" value="Thiolase-like"/>
    <property type="match status" value="1"/>
</dbReference>
<protein>
    <recommendedName>
        <fullName evidence="1">Beta-ketoacyl-[acyl-carrier-protein] synthase III 1</fullName>
        <shortName evidence="1">Beta-ketoacyl-ACP synthase III 1</shortName>
        <shortName evidence="1">KAS III 1</shortName>
        <ecNumber evidence="1">2.3.1.180</ecNumber>
    </recommendedName>
    <alternativeName>
        <fullName evidence="1">3-oxoacyl-[acyl-carrier-protein] synthase 3 1</fullName>
    </alternativeName>
    <alternativeName>
        <fullName evidence="1">3-oxoacyl-[acyl-carrier-protein] synthase III 1</fullName>
    </alternativeName>
</protein>
<reference key="1">
    <citation type="journal article" date="2001" name="Appl. Environ. Microbiol.">
        <title>Molecular characterization of Lactobacillus plantarum genes for beta-ketoacyl-acyl carrier protein synthase III(fabH) and acetyl coenzyme A carboxylase (accBCDA), which are essential for fatty acid biosynthesis.</title>
        <authorList>
            <person name="Kiatpapan P."/>
            <person name="Kobayashi H."/>
            <person name="Sakaguchi M."/>
            <person name="Ono H."/>
            <person name="Yamashita M."/>
            <person name="Kaneko Y."/>
            <person name="Murooka Y."/>
        </authorList>
    </citation>
    <scope>NUCLEOTIDE SEQUENCE [GENOMIC DNA]</scope>
    <source>
        <strain>L137</strain>
    </source>
</reference>
<reference key="2">
    <citation type="journal article" date="2003" name="Proc. Natl. Acad. Sci. U.S.A.">
        <title>Complete genome sequence of Lactobacillus plantarum WCFS1.</title>
        <authorList>
            <person name="Kleerebezem M."/>
            <person name="Boekhorst J."/>
            <person name="van Kranenburg R."/>
            <person name="Molenaar D."/>
            <person name="Kuipers O.P."/>
            <person name="Leer R."/>
            <person name="Tarchini R."/>
            <person name="Peters S.A."/>
            <person name="Sandbrink H.M."/>
            <person name="Fiers M.W.E.J."/>
            <person name="Stiekema W."/>
            <person name="Klein Lankhorst R.M."/>
            <person name="Bron P.A."/>
            <person name="Hoffer S.M."/>
            <person name="Nierop Groot M.N."/>
            <person name="Kerkhoven R."/>
            <person name="De Vries M."/>
            <person name="Ursing B."/>
            <person name="De Vos W.M."/>
            <person name="Siezen R.J."/>
        </authorList>
    </citation>
    <scope>NUCLEOTIDE SEQUENCE [LARGE SCALE GENOMIC DNA]</scope>
    <source>
        <strain>ATCC BAA-793 / NCIMB 8826 / WCFS1</strain>
    </source>
</reference>
<reference key="3">
    <citation type="journal article" date="2012" name="J. Bacteriol.">
        <title>Complete resequencing and reannotation of the Lactobacillus plantarum WCFS1 genome.</title>
        <authorList>
            <person name="Siezen R.J."/>
            <person name="Francke C."/>
            <person name="Renckens B."/>
            <person name="Boekhorst J."/>
            <person name="Wels M."/>
            <person name="Kleerebezem M."/>
            <person name="van Hijum S.A."/>
        </authorList>
    </citation>
    <scope>NUCLEOTIDE SEQUENCE [LARGE SCALE GENOMIC DNA]</scope>
    <scope>GENOME REANNOTATION</scope>
    <source>
        <strain>ATCC BAA-793 / NCIMB 8826 / WCFS1</strain>
    </source>
</reference>
<comment type="function">
    <text evidence="1">Catalyzes the condensation reaction of fatty acid synthesis by the addition to an acyl acceptor of two carbons from malonyl-ACP. Catalyzes the first condensation reaction which initiates fatty acid synthesis and may therefore play a role in governing the total rate of fatty acid production. Possesses both acetoacetyl-ACP synthase and acetyl transacylase activities. Its substrate specificity determines the biosynthesis of branched-chain and/or straight-chain of fatty acids.</text>
</comment>
<comment type="catalytic activity">
    <reaction evidence="1">
        <text>malonyl-[ACP] + acetyl-CoA + H(+) = 3-oxobutanoyl-[ACP] + CO2 + CoA</text>
        <dbReference type="Rhea" id="RHEA:12080"/>
        <dbReference type="Rhea" id="RHEA-COMP:9623"/>
        <dbReference type="Rhea" id="RHEA-COMP:9625"/>
        <dbReference type="ChEBI" id="CHEBI:15378"/>
        <dbReference type="ChEBI" id="CHEBI:16526"/>
        <dbReference type="ChEBI" id="CHEBI:57287"/>
        <dbReference type="ChEBI" id="CHEBI:57288"/>
        <dbReference type="ChEBI" id="CHEBI:78449"/>
        <dbReference type="ChEBI" id="CHEBI:78450"/>
        <dbReference type="EC" id="2.3.1.180"/>
    </reaction>
</comment>
<comment type="pathway">
    <text evidence="1">Lipid metabolism; fatty acid biosynthesis.</text>
</comment>
<comment type="subunit">
    <text evidence="1">Homodimer.</text>
</comment>
<comment type="subcellular location">
    <subcellularLocation>
        <location evidence="1">Cytoplasm</location>
    </subcellularLocation>
</comment>
<comment type="domain">
    <text evidence="1">The last Arg residue of the ACP-binding site is essential for the weak association between ACP/AcpP and FabH.</text>
</comment>
<comment type="similarity">
    <text evidence="1">Belongs to the thiolase-like superfamily. FabH family.</text>
</comment>
<sequence length="323" mass="34391">MPTYTKLTAMGQYVPGRVVDNDELAAIMDTSDEWIQAHTGIKTRHYAMNDENTSDLATQVAQQLLQKSGLAASAIDLILVTTITPDALTPATACLVQANIGADNAFAFDLSAACAGFTFGLATADKFIRSGQYQNVMVISAEVNSKMMDFQDRTAAVFFGDGAGGALLQATDNPDENSLIAEKLESQGNATVIHSGRVRPITEVAATNYPQTDAFYQVGRDVFQFATTVVPEQMRGLIASAQLTPSDLQYVICHQANLRIIEKIAANLALPMTKFPHNVDHYGNTSSAGVAMALANVFDTLTGPVLLTAFGGGLAYGSVLIKK</sequence>
<gene>
    <name evidence="1" type="primary">fabH1</name>
    <name type="ordered locus">lp_0588</name>
</gene>